<comment type="function">
    <text evidence="1">Protein S19 forms a complex with S13 that binds strongly to the 16S ribosomal RNA.</text>
</comment>
<comment type="similarity">
    <text evidence="1">Belongs to the universal ribosomal protein uS19 family.</text>
</comment>
<proteinExistence type="inferred from homology"/>
<organism>
    <name type="scientific">Prochlorococcus marinus (strain MIT 9515)</name>
    <dbReference type="NCBI Taxonomy" id="167542"/>
    <lineage>
        <taxon>Bacteria</taxon>
        <taxon>Bacillati</taxon>
        <taxon>Cyanobacteriota</taxon>
        <taxon>Cyanophyceae</taxon>
        <taxon>Synechococcales</taxon>
        <taxon>Prochlorococcaceae</taxon>
        <taxon>Prochlorococcus</taxon>
    </lineage>
</organism>
<dbReference type="EMBL" id="CP000552">
    <property type="protein sequence ID" value="ABM72943.1"/>
    <property type="molecule type" value="Genomic_DNA"/>
</dbReference>
<dbReference type="RefSeq" id="WP_011821033.1">
    <property type="nucleotide sequence ID" value="NC_008817.1"/>
</dbReference>
<dbReference type="SMR" id="A2BYT2"/>
<dbReference type="STRING" id="167542.P9515_17361"/>
<dbReference type="GeneID" id="60201588"/>
<dbReference type="KEGG" id="pmc:P9515_17361"/>
<dbReference type="eggNOG" id="COG0185">
    <property type="taxonomic scope" value="Bacteria"/>
</dbReference>
<dbReference type="HOGENOM" id="CLU_144911_0_1_3"/>
<dbReference type="OrthoDB" id="9797833at2"/>
<dbReference type="Proteomes" id="UP000001589">
    <property type="component" value="Chromosome"/>
</dbReference>
<dbReference type="GO" id="GO:0005737">
    <property type="term" value="C:cytoplasm"/>
    <property type="evidence" value="ECO:0007669"/>
    <property type="project" value="UniProtKB-ARBA"/>
</dbReference>
<dbReference type="GO" id="GO:0015935">
    <property type="term" value="C:small ribosomal subunit"/>
    <property type="evidence" value="ECO:0007669"/>
    <property type="project" value="InterPro"/>
</dbReference>
<dbReference type="GO" id="GO:0019843">
    <property type="term" value="F:rRNA binding"/>
    <property type="evidence" value="ECO:0007669"/>
    <property type="project" value="UniProtKB-UniRule"/>
</dbReference>
<dbReference type="GO" id="GO:0003735">
    <property type="term" value="F:structural constituent of ribosome"/>
    <property type="evidence" value="ECO:0007669"/>
    <property type="project" value="InterPro"/>
</dbReference>
<dbReference type="GO" id="GO:0000028">
    <property type="term" value="P:ribosomal small subunit assembly"/>
    <property type="evidence" value="ECO:0007669"/>
    <property type="project" value="TreeGrafter"/>
</dbReference>
<dbReference type="GO" id="GO:0006412">
    <property type="term" value="P:translation"/>
    <property type="evidence" value="ECO:0007669"/>
    <property type="project" value="UniProtKB-UniRule"/>
</dbReference>
<dbReference type="FunFam" id="3.30.860.10:FF:000001">
    <property type="entry name" value="30S ribosomal protein S19"/>
    <property type="match status" value="1"/>
</dbReference>
<dbReference type="Gene3D" id="3.30.860.10">
    <property type="entry name" value="30s Ribosomal Protein S19, Chain A"/>
    <property type="match status" value="1"/>
</dbReference>
<dbReference type="HAMAP" id="MF_00531">
    <property type="entry name" value="Ribosomal_uS19"/>
    <property type="match status" value="1"/>
</dbReference>
<dbReference type="InterPro" id="IPR002222">
    <property type="entry name" value="Ribosomal_uS19"/>
</dbReference>
<dbReference type="InterPro" id="IPR005732">
    <property type="entry name" value="Ribosomal_uS19_bac-type"/>
</dbReference>
<dbReference type="InterPro" id="IPR020934">
    <property type="entry name" value="Ribosomal_uS19_CS"/>
</dbReference>
<dbReference type="InterPro" id="IPR023575">
    <property type="entry name" value="Ribosomal_uS19_SF"/>
</dbReference>
<dbReference type="NCBIfam" id="TIGR01050">
    <property type="entry name" value="rpsS_bact"/>
    <property type="match status" value="1"/>
</dbReference>
<dbReference type="PANTHER" id="PTHR11880">
    <property type="entry name" value="RIBOSOMAL PROTEIN S19P FAMILY MEMBER"/>
    <property type="match status" value="1"/>
</dbReference>
<dbReference type="PANTHER" id="PTHR11880:SF8">
    <property type="entry name" value="SMALL RIBOSOMAL SUBUNIT PROTEIN US19M"/>
    <property type="match status" value="1"/>
</dbReference>
<dbReference type="Pfam" id="PF00203">
    <property type="entry name" value="Ribosomal_S19"/>
    <property type="match status" value="1"/>
</dbReference>
<dbReference type="PIRSF" id="PIRSF002144">
    <property type="entry name" value="Ribosomal_S19"/>
    <property type="match status" value="1"/>
</dbReference>
<dbReference type="PRINTS" id="PR00975">
    <property type="entry name" value="RIBOSOMALS19"/>
</dbReference>
<dbReference type="SUPFAM" id="SSF54570">
    <property type="entry name" value="Ribosomal protein S19"/>
    <property type="match status" value="1"/>
</dbReference>
<dbReference type="PROSITE" id="PS00323">
    <property type="entry name" value="RIBOSOMAL_S19"/>
    <property type="match status" value="1"/>
</dbReference>
<name>RS19_PROM5</name>
<feature type="chain" id="PRO_1000051100" description="Small ribosomal subunit protein uS19">
    <location>
        <begin position="1"/>
        <end position="91"/>
    </location>
</feature>
<keyword id="KW-0687">Ribonucleoprotein</keyword>
<keyword id="KW-0689">Ribosomal protein</keyword>
<keyword id="KW-0694">RNA-binding</keyword>
<keyword id="KW-0699">rRNA-binding</keyword>
<protein>
    <recommendedName>
        <fullName evidence="1">Small ribosomal subunit protein uS19</fullName>
    </recommendedName>
    <alternativeName>
        <fullName evidence="2">30S ribosomal protein S19</fullName>
    </alternativeName>
</protein>
<sequence>MGRSLKKGPFIADSLLKKVEKQNTENDKSVIKTWSRSSTILPVMIGHTIAVHNGKAHIPVFITEQMIGHKLGEFAPTRTYRGHLRDKKGAR</sequence>
<accession>A2BYT2</accession>
<evidence type="ECO:0000255" key="1">
    <source>
        <dbReference type="HAMAP-Rule" id="MF_00531"/>
    </source>
</evidence>
<evidence type="ECO:0000305" key="2"/>
<gene>
    <name evidence="1" type="primary">rpsS</name>
    <name evidence="1" type="synonym">rps19</name>
    <name type="ordered locus">P9515_17361</name>
</gene>
<reference key="1">
    <citation type="journal article" date="2007" name="PLoS Genet.">
        <title>Patterns and implications of gene gain and loss in the evolution of Prochlorococcus.</title>
        <authorList>
            <person name="Kettler G.C."/>
            <person name="Martiny A.C."/>
            <person name="Huang K."/>
            <person name="Zucker J."/>
            <person name="Coleman M.L."/>
            <person name="Rodrigue S."/>
            <person name="Chen F."/>
            <person name="Lapidus A."/>
            <person name="Ferriera S."/>
            <person name="Johnson J."/>
            <person name="Steglich C."/>
            <person name="Church G.M."/>
            <person name="Richardson P."/>
            <person name="Chisholm S.W."/>
        </authorList>
    </citation>
    <scope>NUCLEOTIDE SEQUENCE [LARGE SCALE GENOMIC DNA]</scope>
    <source>
        <strain>MIT 9515</strain>
    </source>
</reference>